<comment type="function">
    <text evidence="1">Specifically methylates the adenine in position 37 of tRNA(1)(Val) (anticodon cmo5UAC).</text>
</comment>
<comment type="catalytic activity">
    <reaction evidence="1">
        <text>adenosine(37) in tRNA1(Val) + S-adenosyl-L-methionine = N(6)-methyladenosine(37) in tRNA1(Val) + S-adenosyl-L-homocysteine + H(+)</text>
        <dbReference type="Rhea" id="RHEA:43160"/>
        <dbReference type="Rhea" id="RHEA-COMP:10369"/>
        <dbReference type="Rhea" id="RHEA-COMP:10370"/>
        <dbReference type="ChEBI" id="CHEBI:15378"/>
        <dbReference type="ChEBI" id="CHEBI:57856"/>
        <dbReference type="ChEBI" id="CHEBI:59789"/>
        <dbReference type="ChEBI" id="CHEBI:74411"/>
        <dbReference type="ChEBI" id="CHEBI:74449"/>
        <dbReference type="EC" id="2.1.1.223"/>
    </reaction>
</comment>
<comment type="subcellular location">
    <subcellularLocation>
        <location evidence="1">Cytoplasm</location>
    </subcellularLocation>
</comment>
<comment type="similarity">
    <text evidence="1">Belongs to the methyltransferase superfamily. tRNA (adenine-N(6)-)-methyltransferase family.</text>
</comment>
<keyword id="KW-0963">Cytoplasm</keyword>
<keyword id="KW-0489">Methyltransferase</keyword>
<keyword id="KW-0949">S-adenosyl-L-methionine</keyword>
<keyword id="KW-0808">Transferase</keyword>
<keyword id="KW-0819">tRNA processing</keyword>
<accession>A0LXM6</accession>
<evidence type="ECO:0000255" key="1">
    <source>
        <dbReference type="HAMAP-Rule" id="MF_01872"/>
    </source>
</evidence>
<dbReference type="EC" id="2.1.1.223" evidence="1"/>
<dbReference type="EMBL" id="CU207366">
    <property type="protein sequence ID" value="CAL65121.1"/>
    <property type="molecule type" value="Genomic_DNA"/>
</dbReference>
<dbReference type="RefSeq" id="WP_011708059.1">
    <property type="nucleotide sequence ID" value="NC_008571.1"/>
</dbReference>
<dbReference type="SMR" id="A0LXM6"/>
<dbReference type="STRING" id="411154.GFO_0132"/>
<dbReference type="KEGG" id="gfo:GFO_0132"/>
<dbReference type="eggNOG" id="COG4123">
    <property type="taxonomic scope" value="Bacteria"/>
</dbReference>
<dbReference type="HOGENOM" id="CLU_061983_0_0_10"/>
<dbReference type="OrthoDB" id="5383291at2"/>
<dbReference type="Proteomes" id="UP000000755">
    <property type="component" value="Chromosome"/>
</dbReference>
<dbReference type="GO" id="GO:0005737">
    <property type="term" value="C:cytoplasm"/>
    <property type="evidence" value="ECO:0007669"/>
    <property type="project" value="UniProtKB-SubCell"/>
</dbReference>
<dbReference type="GO" id="GO:0003676">
    <property type="term" value="F:nucleic acid binding"/>
    <property type="evidence" value="ECO:0007669"/>
    <property type="project" value="InterPro"/>
</dbReference>
<dbReference type="GO" id="GO:0016430">
    <property type="term" value="F:tRNA (adenine-N6)-methyltransferase activity"/>
    <property type="evidence" value="ECO:0007669"/>
    <property type="project" value="UniProtKB-UniRule"/>
</dbReference>
<dbReference type="GO" id="GO:0032259">
    <property type="term" value="P:methylation"/>
    <property type="evidence" value="ECO:0007669"/>
    <property type="project" value="UniProtKB-KW"/>
</dbReference>
<dbReference type="GO" id="GO:0008033">
    <property type="term" value="P:tRNA processing"/>
    <property type="evidence" value="ECO:0007669"/>
    <property type="project" value="UniProtKB-UniRule"/>
</dbReference>
<dbReference type="CDD" id="cd02440">
    <property type="entry name" value="AdoMet_MTases"/>
    <property type="match status" value="1"/>
</dbReference>
<dbReference type="Gene3D" id="3.40.50.150">
    <property type="entry name" value="Vaccinia Virus protein VP39"/>
    <property type="match status" value="1"/>
</dbReference>
<dbReference type="HAMAP" id="MF_01872">
    <property type="entry name" value="tRNA_methyltr_YfiC"/>
    <property type="match status" value="1"/>
</dbReference>
<dbReference type="InterPro" id="IPR002052">
    <property type="entry name" value="DNA_methylase_N6_adenine_CS"/>
</dbReference>
<dbReference type="InterPro" id="IPR029063">
    <property type="entry name" value="SAM-dependent_MTases_sf"/>
</dbReference>
<dbReference type="InterPro" id="IPR007848">
    <property type="entry name" value="Small_mtfrase_dom"/>
</dbReference>
<dbReference type="InterPro" id="IPR050210">
    <property type="entry name" value="tRNA_Adenine-N(6)_MTase"/>
</dbReference>
<dbReference type="InterPro" id="IPR022882">
    <property type="entry name" value="tRNA_adenine-N6_MeTrfase"/>
</dbReference>
<dbReference type="PANTHER" id="PTHR47739">
    <property type="entry name" value="TRNA1(VAL) (ADENINE(37)-N6)-METHYLTRANSFERASE"/>
    <property type="match status" value="1"/>
</dbReference>
<dbReference type="PANTHER" id="PTHR47739:SF1">
    <property type="entry name" value="TRNA1(VAL) (ADENINE(37)-N6)-METHYLTRANSFERASE"/>
    <property type="match status" value="1"/>
</dbReference>
<dbReference type="Pfam" id="PF05175">
    <property type="entry name" value="MTS"/>
    <property type="match status" value="1"/>
</dbReference>
<dbReference type="PRINTS" id="PR00507">
    <property type="entry name" value="N12N6MTFRASE"/>
</dbReference>
<dbReference type="SUPFAM" id="SSF53335">
    <property type="entry name" value="S-adenosyl-L-methionine-dependent methyltransferases"/>
    <property type="match status" value="1"/>
</dbReference>
<dbReference type="PROSITE" id="PS00092">
    <property type="entry name" value="N6_MTASE"/>
    <property type="match status" value="1"/>
</dbReference>
<organism>
    <name type="scientific">Christiangramia forsetii (strain DSM 17595 / CGMCC 1.15422 / KT0803)</name>
    <name type="common">Gramella forsetii</name>
    <dbReference type="NCBI Taxonomy" id="411154"/>
    <lineage>
        <taxon>Bacteria</taxon>
        <taxon>Pseudomonadati</taxon>
        <taxon>Bacteroidota</taxon>
        <taxon>Flavobacteriia</taxon>
        <taxon>Flavobacteriales</taxon>
        <taxon>Flavobacteriaceae</taxon>
        <taxon>Christiangramia</taxon>
    </lineage>
</organism>
<feature type="chain" id="PRO_0000387382" description="tRNA1(Val) (adenine(37)-N6)-methyltransferase">
    <location>
        <begin position="1"/>
        <end position="240"/>
    </location>
</feature>
<gene>
    <name type="ordered locus">GFO_0132</name>
</gene>
<reference key="1">
    <citation type="journal article" date="2006" name="Environ. Microbiol.">
        <title>Whole genome analysis of the marine Bacteroidetes'Gramella forsetii' reveals adaptations to degradation of polymeric organic matter.</title>
        <authorList>
            <person name="Bauer M."/>
            <person name="Kube M."/>
            <person name="Teeling H."/>
            <person name="Richter M."/>
            <person name="Lombardot T."/>
            <person name="Allers E."/>
            <person name="Wuerdemann C.A."/>
            <person name="Quast C."/>
            <person name="Kuhl H."/>
            <person name="Knaust F."/>
            <person name="Woebken D."/>
            <person name="Bischof K."/>
            <person name="Mussmann M."/>
            <person name="Choudhuri J.V."/>
            <person name="Meyer F."/>
            <person name="Reinhardt R."/>
            <person name="Amann R.I."/>
            <person name="Gloeckner F.O."/>
        </authorList>
    </citation>
    <scope>NUCLEOTIDE SEQUENCE [LARGE SCALE GENOMIC DNA]</scope>
    <source>
        <strain>DSM 17595 / CGMCC 1.15422 / KT0803</strain>
    </source>
</reference>
<protein>
    <recommendedName>
        <fullName evidence="1">tRNA1(Val) (adenine(37)-N6)-methyltransferase</fullName>
        <ecNumber evidence="1">2.1.1.223</ecNumber>
    </recommendedName>
    <alternativeName>
        <fullName evidence="1">tRNA m6A37 methyltransferase</fullName>
    </alternativeName>
</protein>
<name>TRMN6_CHRFK</name>
<proteinExistence type="inferred from homology"/>
<sequence length="240" mass="27533">MSNQPFKFKQFSIDQDRCAMKIGTDGVLLGAWASLEHFPDSILDIGTGTGLIALMLAQRSDAELIDALEIEENAYEQSVENFENSDWGDRLFCYHAAFDEFVEEMQDEEKYDLIISNPPFYSENYKTGDEYRDQARFADALPLTELIQGASHLLSENGHLDLIIPFSEERKALEITSSHNLFPNKITRVKGTANSPIKRSLISFNFQKSETVIDELTLEISRHHYTEEFKELVQDFYLKL</sequence>